<sequence length="333" mass="36614">MNTDDTITIYDVAREAGVSMATVSRVVNGNKNVKENTRKKVLEVIDRLDYRPNAVARGLASKKTTTVGVVIPNIANAYFSILAKGIDDIATMYKYNIVLASSDEDDDKEVNVINTLFAKQVDGIIFMGHHLTEKIRAEFSRARTPVVLSGTVDLEHQLPSVNIDHSKAAQDAVALLAKHHDKIAFVSGPLIDDINGKVRLAGYKEGLKKKGLPFKEGLVFEAQYKYQEGYQLAQRVINSGATAAYVAEDELAAGLLNGLFAAGKKVPEDFEIITSNDSTIALYTRPNMTSISQPIYDLGAVAMRMLTKIMNKEELEEKEIVLNHGIRERGTTK</sequence>
<keyword id="KW-0010">Activator</keyword>
<keyword id="KW-0238">DNA-binding</keyword>
<keyword id="KW-1185">Reference proteome</keyword>
<keyword id="KW-0678">Repressor</keyword>
<keyword id="KW-0804">Transcription</keyword>
<keyword id="KW-0805">Transcription regulation</keyword>
<gene>
    <name type="primary">ccpA</name>
    <name type="ordered locus">SMU_1591</name>
</gene>
<organism>
    <name type="scientific">Streptococcus mutans serotype c (strain ATCC 700610 / UA159)</name>
    <dbReference type="NCBI Taxonomy" id="210007"/>
    <lineage>
        <taxon>Bacteria</taxon>
        <taxon>Bacillati</taxon>
        <taxon>Bacillota</taxon>
        <taxon>Bacilli</taxon>
        <taxon>Lactobacillales</taxon>
        <taxon>Streptococcaceae</taxon>
        <taxon>Streptococcus</taxon>
    </lineage>
</organism>
<name>CCPA_STRMU</name>
<protein>
    <recommendedName>
        <fullName>Catabolite control protein A</fullName>
    </recommendedName>
</protein>
<reference key="1">
    <citation type="submission" date="1997-06" db="EMBL/GenBank/DDBJ databases">
        <authorList>
            <person name="Albone E.F."/>
            <person name="Burne R.A."/>
        </authorList>
    </citation>
    <scope>NUCLEOTIDE SEQUENCE [GENOMIC DNA]</scope>
    <source>
        <strain>GS-5</strain>
    </source>
</reference>
<reference key="2">
    <citation type="submission" date="1997-08" db="EMBL/GenBank/DDBJ databases">
        <authorList>
            <person name="Simpson C.L."/>
            <person name="Russell R.R.B."/>
        </authorList>
    </citation>
    <scope>NUCLEOTIDE SEQUENCE [GENOMIC DNA]</scope>
    <source>
        <strain>LT11</strain>
    </source>
</reference>
<reference key="3">
    <citation type="journal article" date="2002" name="Proc. Natl. Acad. Sci. U.S.A.">
        <title>Genome sequence of Streptococcus mutans UA159, a cariogenic dental pathogen.</title>
        <authorList>
            <person name="Ajdic D.J."/>
            <person name="McShan W.M."/>
            <person name="McLaughlin R.E."/>
            <person name="Savic G."/>
            <person name="Chang J."/>
            <person name="Carson M.B."/>
            <person name="Primeaux C."/>
            <person name="Tian R."/>
            <person name="Kenton S."/>
            <person name="Jia H.G."/>
            <person name="Lin S.P."/>
            <person name="Qian Y."/>
            <person name="Li S."/>
            <person name="Zhu H."/>
            <person name="Najar F.Z."/>
            <person name="Lai H."/>
            <person name="White J."/>
            <person name="Roe B.A."/>
            <person name="Ferretti J.J."/>
        </authorList>
    </citation>
    <scope>NUCLEOTIDE SEQUENCE [LARGE SCALE GENOMIC DNA]</scope>
    <source>
        <strain>ATCC 700610 / UA159</strain>
    </source>
</reference>
<dbReference type="EMBL" id="AF001316">
    <property type="protein sequence ID" value="AAB58798.1"/>
    <property type="molecule type" value="Genomic_DNA"/>
</dbReference>
<dbReference type="EMBL" id="AF014460">
    <property type="protein sequence ID" value="AAC46294.1"/>
    <property type="molecule type" value="Genomic_DNA"/>
</dbReference>
<dbReference type="EMBL" id="AE014133">
    <property type="protein sequence ID" value="AAN59234.1"/>
    <property type="molecule type" value="Genomic_DNA"/>
</dbReference>
<dbReference type="RefSeq" id="NP_721928.1">
    <property type="nucleotide sequence ID" value="NC_004350.2"/>
</dbReference>
<dbReference type="RefSeq" id="WP_002262797.1">
    <property type="nucleotide sequence ID" value="NC_004350.2"/>
</dbReference>
<dbReference type="SMR" id="O07329"/>
<dbReference type="STRING" id="210007.SMU_1591"/>
<dbReference type="KEGG" id="smu:SMU_1591"/>
<dbReference type="PATRIC" id="fig|210007.7.peg.1416"/>
<dbReference type="eggNOG" id="COG1609">
    <property type="taxonomic scope" value="Bacteria"/>
</dbReference>
<dbReference type="HOGENOM" id="CLU_037628_6_0_9"/>
<dbReference type="OrthoDB" id="9784962at2"/>
<dbReference type="PhylomeDB" id="O07329"/>
<dbReference type="Proteomes" id="UP000002512">
    <property type="component" value="Chromosome"/>
</dbReference>
<dbReference type="GO" id="GO:0003700">
    <property type="term" value="F:DNA-binding transcription factor activity"/>
    <property type="evidence" value="ECO:0007669"/>
    <property type="project" value="TreeGrafter"/>
</dbReference>
<dbReference type="GO" id="GO:0000976">
    <property type="term" value="F:transcription cis-regulatory region binding"/>
    <property type="evidence" value="ECO:0007669"/>
    <property type="project" value="TreeGrafter"/>
</dbReference>
<dbReference type="CDD" id="cd01392">
    <property type="entry name" value="HTH_LacI"/>
    <property type="match status" value="1"/>
</dbReference>
<dbReference type="CDD" id="cd06298">
    <property type="entry name" value="PBP1_CcpA"/>
    <property type="match status" value="1"/>
</dbReference>
<dbReference type="FunFam" id="3.40.50.2300:FF:000140">
    <property type="entry name" value="Catabolite control protein A"/>
    <property type="match status" value="1"/>
</dbReference>
<dbReference type="FunFam" id="1.10.260.40:FF:000002">
    <property type="entry name" value="HTH-type transcriptional repressor PurR"/>
    <property type="match status" value="1"/>
</dbReference>
<dbReference type="Gene3D" id="3.40.50.2300">
    <property type="match status" value="2"/>
</dbReference>
<dbReference type="Gene3D" id="1.10.260.40">
    <property type="entry name" value="lambda repressor-like DNA-binding domains"/>
    <property type="match status" value="1"/>
</dbReference>
<dbReference type="InterPro" id="IPR006377">
    <property type="entry name" value="CcpA"/>
</dbReference>
<dbReference type="InterPro" id="IPR000843">
    <property type="entry name" value="HTH_LacI"/>
</dbReference>
<dbReference type="InterPro" id="IPR046335">
    <property type="entry name" value="LacI/GalR-like_sensor"/>
</dbReference>
<dbReference type="InterPro" id="IPR010982">
    <property type="entry name" value="Lambda_DNA-bd_dom_sf"/>
</dbReference>
<dbReference type="InterPro" id="IPR028082">
    <property type="entry name" value="Peripla_BP_I"/>
</dbReference>
<dbReference type="NCBIfam" id="TIGR01481">
    <property type="entry name" value="ccpA"/>
    <property type="match status" value="1"/>
</dbReference>
<dbReference type="PANTHER" id="PTHR30146:SF150">
    <property type="entry name" value="ARABINOSE METABOLISM TRANSCRIPTIONAL REPRESSOR"/>
    <property type="match status" value="1"/>
</dbReference>
<dbReference type="PANTHER" id="PTHR30146">
    <property type="entry name" value="LACI-RELATED TRANSCRIPTIONAL REPRESSOR"/>
    <property type="match status" value="1"/>
</dbReference>
<dbReference type="Pfam" id="PF00356">
    <property type="entry name" value="LacI"/>
    <property type="match status" value="1"/>
</dbReference>
<dbReference type="Pfam" id="PF13377">
    <property type="entry name" value="Peripla_BP_3"/>
    <property type="match status" value="1"/>
</dbReference>
<dbReference type="PRINTS" id="PR00036">
    <property type="entry name" value="HTHLACI"/>
</dbReference>
<dbReference type="SMART" id="SM00354">
    <property type="entry name" value="HTH_LACI"/>
    <property type="match status" value="1"/>
</dbReference>
<dbReference type="SUPFAM" id="SSF47413">
    <property type="entry name" value="lambda repressor-like DNA-binding domains"/>
    <property type="match status" value="1"/>
</dbReference>
<dbReference type="SUPFAM" id="SSF53822">
    <property type="entry name" value="Periplasmic binding protein-like I"/>
    <property type="match status" value="1"/>
</dbReference>
<dbReference type="PROSITE" id="PS00356">
    <property type="entry name" value="HTH_LACI_1"/>
    <property type="match status" value="1"/>
</dbReference>
<dbReference type="PROSITE" id="PS50932">
    <property type="entry name" value="HTH_LACI_2"/>
    <property type="match status" value="1"/>
</dbReference>
<feature type="chain" id="PRO_0000107935" description="Catabolite control protein A">
    <location>
        <begin position="1"/>
        <end position="333"/>
    </location>
</feature>
<feature type="domain" description="HTH lacI-type" evidence="2">
    <location>
        <begin position="7"/>
        <end position="61"/>
    </location>
</feature>
<feature type="DNA-binding region" description="H-T-H motif" evidence="2">
    <location>
        <begin position="9"/>
        <end position="28"/>
    </location>
</feature>
<feature type="sequence conflict" description="In Ref. 1; AAB58798." evidence="3" ref="1">
    <original>K</original>
    <variation>R</variation>
    <location>
        <position position="264"/>
    </location>
</feature>
<feature type="sequence conflict" description="In Ref. 1; AAB58798." evidence="3" ref="1">
    <original>RE</original>
    <variation>KK</variation>
    <location>
        <begin position="327"/>
        <end position="328"/>
    </location>
</feature>
<feature type="sequence conflict" description="In Ref. 2; AAC46294." evidence="3" ref="2">
    <original>T</original>
    <variation>P</variation>
    <location>
        <position position="331"/>
    </location>
</feature>
<evidence type="ECO:0000250" key="1"/>
<evidence type="ECO:0000255" key="2">
    <source>
        <dbReference type="PROSITE-ProRule" id="PRU00111"/>
    </source>
</evidence>
<evidence type="ECO:0000305" key="3"/>
<comment type="function">
    <text evidence="1">Global transcriptional regulator of carbon catabolite repression (CCR) and carbon catabolite activation (CCA), which ensures optimal energy usage under diverse conditions.</text>
</comment>
<accession>O07329</accession>
<proteinExistence type="inferred from homology"/>